<comment type="function">
    <text evidence="2">Conjugation of reduced glutathione to a wide number of exogenous and endogenous hydrophobic electrophiles. Involved in the formation of glutathione conjugates of both prostaglandin A2 (PGA2) and prostaglandin J2 (PGJ2). Participates in the formation of novel hepoxilin regioisomers. Negatively regulates CDK5 activity via p25/p35 translocation to prevent neurodegeneration.</text>
</comment>
<comment type="catalytic activity">
    <reaction evidence="2">
        <text>RX + glutathione = an S-substituted glutathione + a halide anion + H(+)</text>
        <dbReference type="Rhea" id="RHEA:16437"/>
        <dbReference type="ChEBI" id="CHEBI:15378"/>
        <dbReference type="ChEBI" id="CHEBI:16042"/>
        <dbReference type="ChEBI" id="CHEBI:17792"/>
        <dbReference type="ChEBI" id="CHEBI:57925"/>
        <dbReference type="ChEBI" id="CHEBI:90779"/>
        <dbReference type="EC" id="2.5.1.18"/>
    </reaction>
    <physiologicalReaction direction="left-to-right" evidence="2">
        <dbReference type="Rhea" id="RHEA:16438"/>
    </physiologicalReaction>
</comment>
<comment type="catalytic activity">
    <reaction evidence="2">
        <text>prostaglandin J2 + glutathione = prostaglandin J2-S-(R)-glutathione</text>
        <dbReference type="Rhea" id="RHEA:50804"/>
        <dbReference type="ChEBI" id="CHEBI:57925"/>
        <dbReference type="ChEBI" id="CHEBI:133396"/>
        <dbReference type="ChEBI" id="CHEBI:133771"/>
    </reaction>
    <physiologicalReaction direction="left-to-right" evidence="2">
        <dbReference type="Rhea" id="RHEA:50805"/>
    </physiologicalReaction>
</comment>
<comment type="catalytic activity">
    <reaction evidence="2">
        <text>prostaglandin J2 + glutathione = prostaglandin J2-S-(S)-glutathione</text>
        <dbReference type="Rhea" id="RHEA:50808"/>
        <dbReference type="ChEBI" id="CHEBI:57925"/>
        <dbReference type="ChEBI" id="CHEBI:133396"/>
        <dbReference type="ChEBI" id="CHEBI:133772"/>
    </reaction>
    <physiologicalReaction direction="left-to-right" evidence="2">
        <dbReference type="Rhea" id="RHEA:50809"/>
    </physiologicalReaction>
</comment>
<comment type="catalytic activity">
    <reaction evidence="2">
        <text>prostaglandin A2 + glutathione = prostaglandin A2-S-(S)-glutathione</text>
        <dbReference type="Rhea" id="RHEA:50800"/>
        <dbReference type="ChEBI" id="CHEBI:57925"/>
        <dbReference type="ChEBI" id="CHEBI:133370"/>
        <dbReference type="ChEBI" id="CHEBI:133769"/>
    </reaction>
    <physiologicalReaction direction="left-to-right" evidence="2">
        <dbReference type="Rhea" id="RHEA:50801"/>
    </physiologicalReaction>
</comment>
<comment type="catalytic activity">
    <reaction evidence="2">
        <text>11(S)-hydroxy-14(S),15(S)-epoxy-(5Z,8Z,12E)-eicosatrienoate + glutathione = (11S,15S)-dihydroxy-14(R)-S-glutathionyl-(5Z,8Z,12E)-eicosatrienoate</text>
        <dbReference type="Rhea" id="RHEA:50260"/>
        <dbReference type="ChEBI" id="CHEBI:57925"/>
        <dbReference type="ChEBI" id="CHEBI:132200"/>
        <dbReference type="ChEBI" id="CHEBI:132201"/>
    </reaction>
    <physiologicalReaction direction="left-to-right" evidence="2">
        <dbReference type="Rhea" id="RHEA:50261"/>
    </physiologicalReaction>
</comment>
<comment type="subunit">
    <text evidence="1">Homodimer. Interacts with CDK5.</text>
</comment>
<comment type="subcellular location">
    <subcellularLocation>
        <location evidence="1">Cytoplasm</location>
    </subcellularLocation>
    <subcellularLocation>
        <location evidence="1">Mitochondrion</location>
    </subcellularLocation>
    <subcellularLocation>
        <location evidence="1">Nucleus</location>
    </subcellularLocation>
    <text evidence="1">The 83 N-terminal amino acids function as un uncleaved transit peptide, and arginine residues within it are crucial for mitochondrial localization.</text>
</comment>
<comment type="similarity">
    <text evidence="4">Belongs to the GST superfamily. Pi family.</text>
</comment>
<evidence type="ECO:0000250" key="1"/>
<evidence type="ECO:0000250" key="2">
    <source>
        <dbReference type="UniProtKB" id="P09211"/>
    </source>
</evidence>
<evidence type="ECO:0000250" key="3">
    <source>
        <dbReference type="UniProtKB" id="P19157"/>
    </source>
</evidence>
<evidence type="ECO:0000305" key="4"/>
<name>GSTP1_MACMU</name>
<sequence length="210" mass="23438">MPPYTVVYFPVRGRCAALRMLLADQGQSWKEEVVTMETWQEGSLKASCLYGQLPKFQDGDLTLYQSNTFLRHLGRTLGLYGKDQREAALVDMVNDGVEDLRCKYLSLIYTNYEAGKDDYVKALPGQLKPFETLLSQNQGGKTFIVGDQISFADYNLLDLLLIHEVLAPGCLDAFPLLSAYVARLSARPKLKAFLASPEHVNLPINGNGKQ</sequence>
<gene>
    <name type="primary">GSTP1</name>
</gene>
<feature type="chain" id="PRO_0000185901" description="Glutathione S-transferase P">
    <location>
        <begin position="1"/>
        <end position="210"/>
    </location>
</feature>
<feature type="domain" description="GST N-terminal">
    <location>
        <begin position="2"/>
        <end position="81"/>
    </location>
</feature>
<feature type="domain" description="GST C-terminal">
    <location>
        <begin position="83"/>
        <end position="204"/>
    </location>
</feature>
<feature type="binding site" evidence="2">
    <location>
        <position position="8"/>
    </location>
    <ligand>
        <name>glutathione</name>
        <dbReference type="ChEBI" id="CHEBI:57925"/>
    </ligand>
</feature>
<feature type="binding site" evidence="2">
    <location>
        <position position="14"/>
    </location>
    <ligand>
        <name>glutathione</name>
        <dbReference type="ChEBI" id="CHEBI:57925"/>
    </ligand>
</feature>
<feature type="binding site" evidence="2">
    <location>
        <position position="39"/>
    </location>
    <ligand>
        <name>glutathione</name>
        <dbReference type="ChEBI" id="CHEBI:57925"/>
    </ligand>
</feature>
<feature type="binding site" evidence="2">
    <location>
        <position position="45"/>
    </location>
    <ligand>
        <name>glutathione</name>
        <dbReference type="ChEBI" id="CHEBI:57925"/>
    </ligand>
</feature>
<feature type="binding site" evidence="2">
    <location>
        <begin position="52"/>
        <end position="53"/>
    </location>
    <ligand>
        <name>glutathione</name>
        <dbReference type="ChEBI" id="CHEBI:57925"/>
    </ligand>
</feature>
<feature type="binding site" evidence="2">
    <location>
        <begin position="65"/>
        <end position="66"/>
    </location>
    <ligand>
        <name>glutathione</name>
        <dbReference type="ChEBI" id="CHEBI:57925"/>
    </ligand>
</feature>
<feature type="modified residue" description="Phosphotyrosine; by EGFR" evidence="2">
    <location>
        <position position="4"/>
    </location>
</feature>
<feature type="modified residue" description="Phosphothreonine" evidence="2">
    <location>
        <position position="62"/>
    </location>
</feature>
<feature type="modified residue" description="N6-succinyllysine" evidence="3">
    <location>
        <position position="103"/>
    </location>
</feature>
<feature type="modified residue" description="N6-succinyllysine" evidence="3">
    <location>
        <position position="116"/>
    </location>
</feature>
<feature type="modified residue" description="N6-acetyllysine" evidence="2">
    <location>
        <position position="128"/>
    </location>
</feature>
<protein>
    <recommendedName>
        <fullName evidence="4">Glutathione S-transferase P</fullName>
        <ecNumber evidence="2">2.5.1.18</ecNumber>
    </recommendedName>
    <alternativeName>
        <fullName>GST class-pi</fullName>
    </alternativeName>
</protein>
<reference key="1">
    <citation type="journal article" date="1998" name="Gene">
        <title>The mRNA for GST Pi from FRHK rhesus monkey kidney cells codes for an enzyme with activity towards 1-chloro-2,4-dinitrobenzene in spite of an I68F mutation.</title>
        <authorList>
            <person name="Swedmark S."/>
            <person name="Morgenstern R."/>
            <person name="Weinander R."/>
        </authorList>
    </citation>
    <scope>NUCLEOTIDE SEQUENCE [MRNA]</scope>
    <source>
        <tissue>Kidney</tissue>
    </source>
</reference>
<proteinExistence type="evidence at transcript level"/>
<dbReference type="EC" id="2.5.1.18" evidence="2"/>
<dbReference type="EMBL" id="L49501">
    <property type="protein sequence ID" value="AAC37605.1"/>
    <property type="molecule type" value="mRNA"/>
</dbReference>
<dbReference type="PIR" id="JC6529">
    <property type="entry name" value="JC6529"/>
</dbReference>
<dbReference type="RefSeq" id="NP_001036141.1">
    <property type="nucleotide sequence ID" value="NM_001042676.1"/>
</dbReference>
<dbReference type="SMR" id="Q28514"/>
<dbReference type="FunCoup" id="Q28514">
    <property type="interactions" value="605"/>
</dbReference>
<dbReference type="STRING" id="9544.ENSMMUP00000058004"/>
<dbReference type="Ensembl" id="ENSMMUT00000026042.4">
    <property type="protein sequence ID" value="ENSMMUP00000024369.3"/>
    <property type="gene ID" value="ENSMMUG00000018524.4"/>
</dbReference>
<dbReference type="GeneID" id="721704"/>
<dbReference type="KEGG" id="mcc:721704"/>
<dbReference type="CTD" id="2950"/>
<dbReference type="VEuPathDB" id="HostDB:ENSMMUG00000018524"/>
<dbReference type="VGNC" id="VGNC:101091">
    <property type="gene designation" value="GSTP1"/>
</dbReference>
<dbReference type="GeneTree" id="ENSGT00940000162460"/>
<dbReference type="InParanoid" id="Q28514"/>
<dbReference type="OrthoDB" id="4951845at2759"/>
<dbReference type="Proteomes" id="UP000006718">
    <property type="component" value="Chromosome 14"/>
</dbReference>
<dbReference type="Bgee" id="ENSMMUG00000018524">
    <property type="expression patterns" value="Expressed in olfactory segment of nasal mucosa and 21 other cell types or tissues"/>
</dbReference>
<dbReference type="ExpressionAtlas" id="Q28514">
    <property type="expression patterns" value="baseline"/>
</dbReference>
<dbReference type="GO" id="GO:0005829">
    <property type="term" value="C:cytosol"/>
    <property type="evidence" value="ECO:0000318"/>
    <property type="project" value="GO_Central"/>
</dbReference>
<dbReference type="GO" id="GO:0005739">
    <property type="term" value="C:mitochondrion"/>
    <property type="evidence" value="ECO:0007669"/>
    <property type="project" value="UniProtKB-SubCell"/>
</dbReference>
<dbReference type="GO" id="GO:0005634">
    <property type="term" value="C:nucleus"/>
    <property type="evidence" value="ECO:0007669"/>
    <property type="project" value="UniProtKB-SubCell"/>
</dbReference>
<dbReference type="GO" id="GO:0004364">
    <property type="term" value="F:glutathione transferase activity"/>
    <property type="evidence" value="ECO:0000250"/>
    <property type="project" value="UniProtKB"/>
</dbReference>
<dbReference type="GO" id="GO:1901687">
    <property type="term" value="P:glutathione derivative biosynthetic process"/>
    <property type="evidence" value="ECO:0000250"/>
    <property type="project" value="UniProtKB"/>
</dbReference>
<dbReference type="GO" id="GO:0006749">
    <property type="term" value="P:glutathione metabolic process"/>
    <property type="evidence" value="ECO:0000250"/>
    <property type="project" value="UniProtKB"/>
</dbReference>
<dbReference type="GO" id="GO:0051122">
    <property type="term" value="P:hepoxilin biosynthetic process"/>
    <property type="evidence" value="ECO:0000250"/>
    <property type="project" value="UniProtKB"/>
</dbReference>
<dbReference type="GO" id="GO:0006693">
    <property type="term" value="P:prostaglandin metabolic process"/>
    <property type="evidence" value="ECO:0000250"/>
    <property type="project" value="UniProtKB"/>
</dbReference>
<dbReference type="GO" id="GO:0006805">
    <property type="term" value="P:xenobiotic metabolic process"/>
    <property type="evidence" value="ECO:0000250"/>
    <property type="project" value="UniProtKB"/>
</dbReference>
<dbReference type="CDD" id="cd03210">
    <property type="entry name" value="GST_C_Pi"/>
    <property type="match status" value="1"/>
</dbReference>
<dbReference type="CDD" id="cd03076">
    <property type="entry name" value="GST_N_Pi"/>
    <property type="match status" value="1"/>
</dbReference>
<dbReference type="FunFam" id="1.20.1050.10:FF:000047">
    <property type="entry name" value="Glutathione S-transferase P"/>
    <property type="match status" value="1"/>
</dbReference>
<dbReference type="FunFam" id="3.40.30.10:FF:000071">
    <property type="entry name" value="Glutathione S-transferase P"/>
    <property type="match status" value="1"/>
</dbReference>
<dbReference type="FunFam" id="3.40.30.10:FF:000392">
    <property type="entry name" value="Glutathione S-transferase pi 1"/>
    <property type="match status" value="1"/>
</dbReference>
<dbReference type="Gene3D" id="1.20.1050.10">
    <property type="match status" value="1"/>
</dbReference>
<dbReference type="Gene3D" id="3.40.30.10">
    <property type="entry name" value="Glutaredoxin"/>
    <property type="match status" value="1"/>
</dbReference>
<dbReference type="InterPro" id="IPR010987">
    <property type="entry name" value="Glutathione-S-Trfase_C-like"/>
</dbReference>
<dbReference type="InterPro" id="IPR036282">
    <property type="entry name" value="Glutathione-S-Trfase_C_sf"/>
</dbReference>
<dbReference type="InterPro" id="IPR040079">
    <property type="entry name" value="Glutathione_S-Trfase"/>
</dbReference>
<dbReference type="InterPro" id="IPR004045">
    <property type="entry name" value="Glutathione_S-Trfase_N"/>
</dbReference>
<dbReference type="InterPro" id="IPR004046">
    <property type="entry name" value="GST_C"/>
</dbReference>
<dbReference type="InterPro" id="IPR003082">
    <property type="entry name" value="GST_pi"/>
</dbReference>
<dbReference type="InterPro" id="IPR050213">
    <property type="entry name" value="GST_superfamily"/>
</dbReference>
<dbReference type="InterPro" id="IPR036249">
    <property type="entry name" value="Thioredoxin-like_sf"/>
</dbReference>
<dbReference type="PANTHER" id="PTHR11571">
    <property type="entry name" value="GLUTATHIONE S-TRANSFERASE"/>
    <property type="match status" value="1"/>
</dbReference>
<dbReference type="PANTHER" id="PTHR11571:SF255">
    <property type="entry name" value="GLUTATHIONE S-TRANSFERASE P"/>
    <property type="match status" value="1"/>
</dbReference>
<dbReference type="Pfam" id="PF14497">
    <property type="entry name" value="GST_C_3"/>
    <property type="match status" value="1"/>
</dbReference>
<dbReference type="Pfam" id="PF02798">
    <property type="entry name" value="GST_N"/>
    <property type="match status" value="1"/>
</dbReference>
<dbReference type="PRINTS" id="PR01268">
    <property type="entry name" value="GSTRNSFRASEP"/>
</dbReference>
<dbReference type="SFLD" id="SFLDG01205">
    <property type="entry name" value="AMPS.1"/>
    <property type="match status" value="1"/>
</dbReference>
<dbReference type="SFLD" id="SFLDS00019">
    <property type="entry name" value="Glutathione_Transferase_(cytos"/>
    <property type="match status" value="1"/>
</dbReference>
<dbReference type="SUPFAM" id="SSF47616">
    <property type="entry name" value="GST C-terminal domain-like"/>
    <property type="match status" value="1"/>
</dbReference>
<dbReference type="SUPFAM" id="SSF52833">
    <property type="entry name" value="Thioredoxin-like"/>
    <property type="match status" value="1"/>
</dbReference>
<dbReference type="PROSITE" id="PS50405">
    <property type="entry name" value="GST_CTER"/>
    <property type="match status" value="1"/>
</dbReference>
<dbReference type="PROSITE" id="PS50404">
    <property type="entry name" value="GST_NTER"/>
    <property type="match status" value="1"/>
</dbReference>
<keyword id="KW-0007">Acetylation</keyword>
<keyword id="KW-0963">Cytoplasm</keyword>
<keyword id="KW-0443">Lipid metabolism</keyword>
<keyword id="KW-0496">Mitochondrion</keyword>
<keyword id="KW-0539">Nucleus</keyword>
<keyword id="KW-0597">Phosphoprotein</keyword>
<keyword id="KW-1185">Reference proteome</keyword>
<keyword id="KW-0808">Transferase</keyword>
<organism>
    <name type="scientific">Macaca mulatta</name>
    <name type="common">Rhesus macaque</name>
    <dbReference type="NCBI Taxonomy" id="9544"/>
    <lineage>
        <taxon>Eukaryota</taxon>
        <taxon>Metazoa</taxon>
        <taxon>Chordata</taxon>
        <taxon>Craniata</taxon>
        <taxon>Vertebrata</taxon>
        <taxon>Euteleostomi</taxon>
        <taxon>Mammalia</taxon>
        <taxon>Eutheria</taxon>
        <taxon>Euarchontoglires</taxon>
        <taxon>Primates</taxon>
        <taxon>Haplorrhini</taxon>
        <taxon>Catarrhini</taxon>
        <taxon>Cercopithecidae</taxon>
        <taxon>Cercopithecinae</taxon>
        <taxon>Macaca</taxon>
    </lineage>
</organism>
<accession>Q28514</accession>